<accession>P96825</accession>
<accession>L0T4I0</accession>
<name>Y0148_MYCTU</name>
<keyword id="KW-1017">Isopeptide bond</keyword>
<keyword id="KW-0560">Oxidoreductase</keyword>
<keyword id="KW-1185">Reference proteome</keyword>
<keyword id="KW-0832">Ubl conjugation</keyword>
<organism>
    <name type="scientific">Mycobacterium tuberculosis (strain ATCC 25618 / H37Rv)</name>
    <dbReference type="NCBI Taxonomy" id="83332"/>
    <lineage>
        <taxon>Bacteria</taxon>
        <taxon>Bacillati</taxon>
        <taxon>Actinomycetota</taxon>
        <taxon>Actinomycetes</taxon>
        <taxon>Mycobacteriales</taxon>
        <taxon>Mycobacteriaceae</taxon>
        <taxon>Mycobacterium</taxon>
        <taxon>Mycobacterium tuberculosis complex</taxon>
    </lineage>
</organism>
<dbReference type="EC" id="1.1.1.-"/>
<dbReference type="EMBL" id="AL123456">
    <property type="protein sequence ID" value="CCP42873.1"/>
    <property type="molecule type" value="Genomic_DNA"/>
</dbReference>
<dbReference type="PIR" id="G70617">
    <property type="entry name" value="G70617"/>
</dbReference>
<dbReference type="RefSeq" id="NP_214662.1">
    <property type="nucleotide sequence ID" value="NC_000962.3"/>
</dbReference>
<dbReference type="RefSeq" id="WP_003400979.1">
    <property type="nucleotide sequence ID" value="NZ_NVQJ01000001.1"/>
</dbReference>
<dbReference type="SMR" id="P96825"/>
<dbReference type="FunCoup" id="P96825">
    <property type="interactions" value="2"/>
</dbReference>
<dbReference type="STRING" id="83332.Rv0148"/>
<dbReference type="PaxDb" id="83332-Rv0148"/>
<dbReference type="DNASU" id="886845"/>
<dbReference type="GeneID" id="886845"/>
<dbReference type="KEGG" id="mtu:Rv0148"/>
<dbReference type="KEGG" id="mtv:RVBD_0148"/>
<dbReference type="TubercuList" id="Rv0148"/>
<dbReference type="eggNOG" id="COG1028">
    <property type="taxonomic scope" value="Bacteria"/>
</dbReference>
<dbReference type="InParanoid" id="P96825"/>
<dbReference type="OrthoDB" id="9808187at2"/>
<dbReference type="PhylomeDB" id="P96825"/>
<dbReference type="Proteomes" id="UP000001584">
    <property type="component" value="Chromosome"/>
</dbReference>
<dbReference type="GO" id="GO:0009274">
    <property type="term" value="C:peptidoglycan-based cell wall"/>
    <property type="evidence" value="ECO:0007005"/>
    <property type="project" value="MTBBASE"/>
</dbReference>
<dbReference type="GO" id="GO:0005886">
    <property type="term" value="C:plasma membrane"/>
    <property type="evidence" value="ECO:0007005"/>
    <property type="project" value="MTBBASE"/>
</dbReference>
<dbReference type="GO" id="GO:0003857">
    <property type="term" value="F:3-hydroxyacyl-CoA dehydrogenase activity"/>
    <property type="evidence" value="ECO:0000318"/>
    <property type="project" value="GO_Central"/>
</dbReference>
<dbReference type="GO" id="GO:0004300">
    <property type="term" value="F:enoyl-CoA hydratase activity"/>
    <property type="evidence" value="ECO:0000318"/>
    <property type="project" value="GO_Central"/>
</dbReference>
<dbReference type="GO" id="GO:0006635">
    <property type="term" value="P:fatty acid beta-oxidation"/>
    <property type="evidence" value="ECO:0000318"/>
    <property type="project" value="GO_Central"/>
</dbReference>
<dbReference type="GO" id="GO:0070490">
    <property type="term" value="P:protein pupylation"/>
    <property type="evidence" value="ECO:0000314"/>
    <property type="project" value="UniProtKB"/>
</dbReference>
<dbReference type="CDD" id="cd05353">
    <property type="entry name" value="hydroxyacyl-CoA-like_DH_SDR_c-like"/>
    <property type="match status" value="1"/>
</dbReference>
<dbReference type="FunFam" id="3.40.50.720:FF:000712">
    <property type="entry name" value="Probable short-chain type dehydrogenase/reductase"/>
    <property type="match status" value="1"/>
</dbReference>
<dbReference type="Gene3D" id="3.40.50.720">
    <property type="entry name" value="NAD(P)-binding Rossmann-like Domain"/>
    <property type="match status" value="1"/>
</dbReference>
<dbReference type="InterPro" id="IPR036291">
    <property type="entry name" value="NAD(P)-bd_dom_sf"/>
</dbReference>
<dbReference type="InterPro" id="IPR051687">
    <property type="entry name" value="Peroxisomal_Beta-Oxidation"/>
</dbReference>
<dbReference type="InterPro" id="IPR020904">
    <property type="entry name" value="Sc_DH/Rdtase_CS"/>
</dbReference>
<dbReference type="InterPro" id="IPR002347">
    <property type="entry name" value="SDR_fam"/>
</dbReference>
<dbReference type="PANTHER" id="PTHR45024">
    <property type="entry name" value="DEHYDROGENASES, SHORT CHAIN"/>
    <property type="match status" value="1"/>
</dbReference>
<dbReference type="PANTHER" id="PTHR45024:SF2">
    <property type="entry name" value="SCP2 DOMAIN-CONTAINING PROTEIN"/>
    <property type="match status" value="1"/>
</dbReference>
<dbReference type="Pfam" id="PF00106">
    <property type="entry name" value="adh_short"/>
    <property type="match status" value="1"/>
</dbReference>
<dbReference type="PRINTS" id="PR00081">
    <property type="entry name" value="GDHRDH"/>
</dbReference>
<dbReference type="SMART" id="SM00822">
    <property type="entry name" value="PKS_KR"/>
    <property type="match status" value="1"/>
</dbReference>
<dbReference type="SUPFAM" id="SSF51735">
    <property type="entry name" value="NAD(P)-binding Rossmann-fold domains"/>
    <property type="match status" value="1"/>
</dbReference>
<dbReference type="PROSITE" id="PS00061">
    <property type="entry name" value="ADH_SHORT"/>
    <property type="match status" value="1"/>
</dbReference>
<comment type="PTM">
    <text evidence="3">Pupylated at Lys-280 by the prokaryotic ubiquitin-like protein Pup, which probably leads to its degradation by the proteasome.</text>
</comment>
<comment type="similarity">
    <text evidence="4">Belongs to the short-chain dehydrogenases/reductases (SDR) family.</text>
</comment>
<reference key="1">
    <citation type="journal article" date="1998" name="Nature">
        <title>Deciphering the biology of Mycobacterium tuberculosis from the complete genome sequence.</title>
        <authorList>
            <person name="Cole S.T."/>
            <person name="Brosch R."/>
            <person name="Parkhill J."/>
            <person name="Garnier T."/>
            <person name="Churcher C.M."/>
            <person name="Harris D.E."/>
            <person name="Gordon S.V."/>
            <person name="Eiglmeier K."/>
            <person name="Gas S."/>
            <person name="Barry C.E. III"/>
            <person name="Tekaia F."/>
            <person name="Badcock K."/>
            <person name="Basham D."/>
            <person name="Brown D."/>
            <person name="Chillingworth T."/>
            <person name="Connor R."/>
            <person name="Davies R.M."/>
            <person name="Devlin K."/>
            <person name="Feltwell T."/>
            <person name="Gentles S."/>
            <person name="Hamlin N."/>
            <person name="Holroyd S."/>
            <person name="Hornsby T."/>
            <person name="Jagels K."/>
            <person name="Krogh A."/>
            <person name="McLean J."/>
            <person name="Moule S."/>
            <person name="Murphy L.D."/>
            <person name="Oliver S."/>
            <person name="Osborne J."/>
            <person name="Quail M.A."/>
            <person name="Rajandream M.A."/>
            <person name="Rogers J."/>
            <person name="Rutter S."/>
            <person name="Seeger K."/>
            <person name="Skelton S."/>
            <person name="Squares S."/>
            <person name="Squares R."/>
            <person name="Sulston J.E."/>
            <person name="Taylor K."/>
            <person name="Whitehead S."/>
            <person name="Barrell B.G."/>
        </authorList>
    </citation>
    <scope>NUCLEOTIDE SEQUENCE [LARGE SCALE GENOMIC DNA]</scope>
    <source>
        <strain>ATCC 25618 / H37Rv</strain>
    </source>
</reference>
<reference key="2">
    <citation type="journal article" date="2010" name="PLoS ONE">
        <title>Prokaryotic ubiquitin-like protein (Pup) proteome of Mycobacterium tuberculosis.</title>
        <authorList>
            <person name="Festa R.A."/>
            <person name="McAllister F."/>
            <person name="Pearce M.J."/>
            <person name="Mintseris J."/>
            <person name="Burns K.E."/>
            <person name="Gygi S.P."/>
            <person name="Darwin K.H."/>
        </authorList>
    </citation>
    <scope>PUPYLATION AT LYS-280</scope>
    <scope>IDENTIFICATION BY MASS SPECTROMETRY</scope>
    <source>
        <strain>ATCC 25618 / H37Rv</strain>
    </source>
</reference>
<reference key="3">
    <citation type="journal article" date="2011" name="Mol. Cell. Proteomics">
        <title>Proteogenomic analysis of Mycobacterium tuberculosis by high resolution mass spectrometry.</title>
        <authorList>
            <person name="Kelkar D.S."/>
            <person name="Kumar D."/>
            <person name="Kumar P."/>
            <person name="Balakrishnan L."/>
            <person name="Muthusamy B."/>
            <person name="Yadav A.K."/>
            <person name="Shrivastava P."/>
            <person name="Marimuthu A."/>
            <person name="Anand S."/>
            <person name="Sundaram H."/>
            <person name="Kingsbury R."/>
            <person name="Harsha H.C."/>
            <person name="Nair B."/>
            <person name="Prasad T.S."/>
            <person name="Chauhan D.S."/>
            <person name="Katoch K."/>
            <person name="Katoch V.M."/>
            <person name="Kumar P."/>
            <person name="Chaerkady R."/>
            <person name="Ramachandran S."/>
            <person name="Dash D."/>
            <person name="Pandey A."/>
        </authorList>
    </citation>
    <scope>IDENTIFICATION BY MASS SPECTROMETRY [LARGE SCALE ANALYSIS]</scope>
    <source>
        <strain>ATCC 25618 / H37Rv</strain>
    </source>
</reference>
<sequence length="286" mass="29779">MPGVQDRVIVVTGAGGGLGREYALTLAGEGASVVVNDLGGARDGTGAGSAMADEVVAEIRDKGGRAVANYDSVATEDGAANIIKTALDEFGAVHGVVSNAGILRDGTFHKMSFENWDAVLKVHLYGGYHVLRAAWPHFREQSYGRVVVATSTSGLFGNFGQTNYGAAKLGLVGLINTLALEGAKYNIHANALAPIAATRMTQDILPPEVLEKLTPEFVAPVVAYLCTEECADNASVYVVGGGKVQRVALFGNDGANFDKPPSVQDVAARWAEITDLSGAKIAGFKL</sequence>
<evidence type="ECO:0000250" key="1"/>
<evidence type="ECO:0000255" key="2">
    <source>
        <dbReference type="PROSITE-ProRule" id="PRU10001"/>
    </source>
</evidence>
<evidence type="ECO:0000269" key="3">
    <source>
    </source>
</evidence>
<evidence type="ECO:0000305" key="4"/>
<gene>
    <name type="ordered locus">Rv0148</name>
</gene>
<proteinExistence type="evidence at protein level"/>
<feature type="chain" id="PRO_0000395884" description="Putative short-chain type dehydrogenase/reductase Rv0148">
    <location>
        <begin position="1"/>
        <end position="286"/>
    </location>
</feature>
<feature type="active site" description="Proton acceptor" evidence="2">
    <location>
        <position position="164"/>
    </location>
</feature>
<feature type="binding site" evidence="1">
    <location>
        <begin position="11"/>
        <end position="35"/>
    </location>
    <ligand>
        <name>NAD(+)</name>
        <dbReference type="ChEBI" id="CHEBI:57540"/>
    </ligand>
</feature>
<feature type="binding site" evidence="1">
    <location>
        <position position="151"/>
    </location>
    <ligand>
        <name>substrate</name>
    </ligand>
</feature>
<feature type="cross-link" description="Isoglutamyl lysine isopeptide (Lys-Gln) (interchain with Q-Cter in protein Pup)" evidence="3">
    <location>
        <position position="280"/>
    </location>
</feature>
<protein>
    <recommendedName>
        <fullName>Putative short-chain type dehydrogenase/reductase Rv0148</fullName>
        <ecNumber>1.1.1.-</ecNumber>
    </recommendedName>
</protein>